<gene>
    <name evidence="1" type="primary">dapD</name>
    <name type="ordered locus">Bcen2424_2030</name>
</gene>
<reference key="1">
    <citation type="submission" date="2006-08" db="EMBL/GenBank/DDBJ databases">
        <title>Complete sequence of chromosome 1 of Burkholderia cenocepacia HI2424.</title>
        <authorList>
            <person name="Copeland A."/>
            <person name="Lucas S."/>
            <person name="Lapidus A."/>
            <person name="Barry K."/>
            <person name="Detter J.C."/>
            <person name="Glavina del Rio T."/>
            <person name="Hammon N."/>
            <person name="Israni S."/>
            <person name="Pitluck S."/>
            <person name="Chain P."/>
            <person name="Malfatti S."/>
            <person name="Shin M."/>
            <person name="Vergez L."/>
            <person name="Schmutz J."/>
            <person name="Larimer F."/>
            <person name="Land M."/>
            <person name="Hauser L."/>
            <person name="Kyrpides N."/>
            <person name="Kim E."/>
            <person name="LiPuma J.J."/>
            <person name="Gonzalez C.F."/>
            <person name="Konstantinidis K."/>
            <person name="Tiedje J.M."/>
            <person name="Richardson P."/>
        </authorList>
    </citation>
    <scope>NUCLEOTIDE SEQUENCE [LARGE SCALE GENOMIC DNA]</scope>
    <source>
        <strain>HI2424</strain>
    </source>
</reference>
<proteinExistence type="inferred from homology"/>
<organism>
    <name type="scientific">Burkholderia cenocepacia (strain HI2424)</name>
    <dbReference type="NCBI Taxonomy" id="331272"/>
    <lineage>
        <taxon>Bacteria</taxon>
        <taxon>Pseudomonadati</taxon>
        <taxon>Pseudomonadota</taxon>
        <taxon>Betaproteobacteria</taxon>
        <taxon>Burkholderiales</taxon>
        <taxon>Burkholderiaceae</taxon>
        <taxon>Burkholderia</taxon>
        <taxon>Burkholderia cepacia complex</taxon>
    </lineage>
</organism>
<feature type="chain" id="PRO_1000047125" description="2,3,4,5-tetrahydropyridine-2,6-dicarboxylate N-succinyltransferase">
    <location>
        <begin position="1"/>
        <end position="275"/>
    </location>
</feature>
<feature type="binding site" evidence="1">
    <location>
        <position position="106"/>
    </location>
    <ligand>
        <name>substrate</name>
    </ligand>
</feature>
<feature type="binding site" evidence="1">
    <location>
        <position position="143"/>
    </location>
    <ligand>
        <name>substrate</name>
    </ligand>
</feature>
<accession>A0K8F4</accession>
<dbReference type="EC" id="2.3.1.117" evidence="1"/>
<dbReference type="EMBL" id="CP000458">
    <property type="protein sequence ID" value="ABK08781.1"/>
    <property type="molecule type" value="Genomic_DNA"/>
</dbReference>
<dbReference type="RefSeq" id="WP_006478479.1">
    <property type="nucleotide sequence ID" value="NC_008542.1"/>
</dbReference>
<dbReference type="SMR" id="A0K8F4"/>
<dbReference type="GeneID" id="93191604"/>
<dbReference type="KEGG" id="bch:Bcen2424_2030"/>
<dbReference type="HOGENOM" id="CLU_050859_0_1_4"/>
<dbReference type="UniPathway" id="UPA00034">
    <property type="reaction ID" value="UER00019"/>
</dbReference>
<dbReference type="GO" id="GO:0005737">
    <property type="term" value="C:cytoplasm"/>
    <property type="evidence" value="ECO:0007669"/>
    <property type="project" value="UniProtKB-SubCell"/>
</dbReference>
<dbReference type="GO" id="GO:0008666">
    <property type="term" value="F:2,3,4,5-tetrahydropyridine-2,6-dicarboxylate N-succinyltransferase activity"/>
    <property type="evidence" value="ECO:0007669"/>
    <property type="project" value="UniProtKB-UniRule"/>
</dbReference>
<dbReference type="GO" id="GO:0016779">
    <property type="term" value="F:nucleotidyltransferase activity"/>
    <property type="evidence" value="ECO:0007669"/>
    <property type="project" value="TreeGrafter"/>
</dbReference>
<dbReference type="GO" id="GO:0019877">
    <property type="term" value="P:diaminopimelate biosynthetic process"/>
    <property type="evidence" value="ECO:0007669"/>
    <property type="project" value="UniProtKB-UniRule"/>
</dbReference>
<dbReference type="GO" id="GO:0009089">
    <property type="term" value="P:lysine biosynthetic process via diaminopimelate"/>
    <property type="evidence" value="ECO:0007669"/>
    <property type="project" value="UniProtKB-UniRule"/>
</dbReference>
<dbReference type="CDD" id="cd03350">
    <property type="entry name" value="LbH_THP_succinylT"/>
    <property type="match status" value="1"/>
</dbReference>
<dbReference type="Gene3D" id="2.160.10.10">
    <property type="entry name" value="Hexapeptide repeat proteins"/>
    <property type="match status" value="1"/>
</dbReference>
<dbReference type="Gene3D" id="1.10.166.10">
    <property type="entry name" value="Tetrahydrodipicolinate-N-succinyltransferase, N-terminal domain"/>
    <property type="match status" value="1"/>
</dbReference>
<dbReference type="HAMAP" id="MF_00811">
    <property type="entry name" value="DapD"/>
    <property type="match status" value="1"/>
</dbReference>
<dbReference type="InterPro" id="IPR005664">
    <property type="entry name" value="DapD_Trfase_Hexpep_rpt_fam"/>
</dbReference>
<dbReference type="InterPro" id="IPR001451">
    <property type="entry name" value="Hexapep"/>
</dbReference>
<dbReference type="InterPro" id="IPR018357">
    <property type="entry name" value="Hexapep_transf_CS"/>
</dbReference>
<dbReference type="InterPro" id="IPR023180">
    <property type="entry name" value="THP_succinylTrfase_dom1"/>
</dbReference>
<dbReference type="InterPro" id="IPR037133">
    <property type="entry name" value="THP_succinylTrfase_N_sf"/>
</dbReference>
<dbReference type="InterPro" id="IPR011004">
    <property type="entry name" value="Trimer_LpxA-like_sf"/>
</dbReference>
<dbReference type="NCBIfam" id="TIGR00965">
    <property type="entry name" value="dapD"/>
    <property type="match status" value="1"/>
</dbReference>
<dbReference type="NCBIfam" id="NF008808">
    <property type="entry name" value="PRK11830.1"/>
    <property type="match status" value="1"/>
</dbReference>
<dbReference type="PANTHER" id="PTHR19136:SF52">
    <property type="entry name" value="2,3,4,5-TETRAHYDROPYRIDINE-2,6-DICARBOXYLATE N-SUCCINYLTRANSFERASE"/>
    <property type="match status" value="1"/>
</dbReference>
<dbReference type="PANTHER" id="PTHR19136">
    <property type="entry name" value="MOLYBDENUM COFACTOR GUANYLYLTRANSFERASE"/>
    <property type="match status" value="1"/>
</dbReference>
<dbReference type="Pfam" id="PF14602">
    <property type="entry name" value="Hexapep_2"/>
    <property type="match status" value="1"/>
</dbReference>
<dbReference type="Pfam" id="PF14805">
    <property type="entry name" value="THDPS_N_2"/>
    <property type="match status" value="1"/>
</dbReference>
<dbReference type="SUPFAM" id="SSF51161">
    <property type="entry name" value="Trimeric LpxA-like enzymes"/>
    <property type="match status" value="1"/>
</dbReference>
<dbReference type="PROSITE" id="PS00101">
    <property type="entry name" value="HEXAPEP_TRANSFERASES"/>
    <property type="match status" value="1"/>
</dbReference>
<protein>
    <recommendedName>
        <fullName evidence="1">2,3,4,5-tetrahydropyridine-2,6-dicarboxylate N-succinyltransferase</fullName>
        <ecNumber evidence="1">2.3.1.117</ecNumber>
    </recommendedName>
    <alternativeName>
        <fullName evidence="1">Tetrahydrodipicolinate N-succinyltransferase</fullName>
        <shortName evidence="1">THDP succinyltransferase</shortName>
        <shortName evidence="1">THP succinyltransferase</shortName>
        <shortName evidence="1">Tetrahydropicolinate succinylase</shortName>
    </alternativeName>
</protein>
<keyword id="KW-0012">Acyltransferase</keyword>
<keyword id="KW-0028">Amino-acid biosynthesis</keyword>
<keyword id="KW-0963">Cytoplasm</keyword>
<keyword id="KW-0220">Diaminopimelate biosynthesis</keyword>
<keyword id="KW-0457">Lysine biosynthesis</keyword>
<keyword id="KW-0677">Repeat</keyword>
<keyword id="KW-0808">Transferase</keyword>
<sequence>MSQQLQQIIDTAWENRAELSPKAAPADVREAVAHAIEQLDKGALRVAEKIDGNWTVHQWLKKAVLLSFRLEDNAPMPAGGYSQFYDKVPSKFANYTAEDFAAGGFRVVPPAIARRGSFIAKNVVLMPSYTNIGAYVDEGTMVDTWATVGSCAQIGKNVHLSGGVGIGGVLEPLQANPVIIEDNCFIGARSEVVEGVIVEENSVISMGVYLGQSTKIYDRETGEVSYGRIPAGSVVVAGNLPSKDGSHSLYCAVIVKKVDAKTRAKVGLNELLRGD</sequence>
<evidence type="ECO:0000255" key="1">
    <source>
        <dbReference type="HAMAP-Rule" id="MF_00811"/>
    </source>
</evidence>
<name>DAPD_BURCH</name>
<comment type="catalytic activity">
    <reaction evidence="1">
        <text>(S)-2,3,4,5-tetrahydrodipicolinate + succinyl-CoA + H2O = (S)-2-succinylamino-6-oxoheptanedioate + CoA</text>
        <dbReference type="Rhea" id="RHEA:17325"/>
        <dbReference type="ChEBI" id="CHEBI:15377"/>
        <dbReference type="ChEBI" id="CHEBI:15685"/>
        <dbReference type="ChEBI" id="CHEBI:16845"/>
        <dbReference type="ChEBI" id="CHEBI:57287"/>
        <dbReference type="ChEBI" id="CHEBI:57292"/>
        <dbReference type="EC" id="2.3.1.117"/>
    </reaction>
</comment>
<comment type="pathway">
    <text evidence="1">Amino-acid biosynthesis; L-lysine biosynthesis via DAP pathway; LL-2,6-diaminopimelate from (S)-tetrahydrodipicolinate (succinylase route): step 1/3.</text>
</comment>
<comment type="subunit">
    <text evidence="1">Homotrimer.</text>
</comment>
<comment type="subcellular location">
    <subcellularLocation>
        <location evidence="1">Cytoplasm</location>
    </subcellularLocation>
</comment>
<comment type="similarity">
    <text evidence="1">Belongs to the transferase hexapeptide repeat family.</text>
</comment>